<sequence length="248" mass="26397">MSVSPVAIVSTPVAAPESSAAVAVPPVVVRWRGVEPYETSFDAMRAFTDARTADTVDEIWIVEHPPVYTLGQAGDPAHLLVGDSGIPLVKVDRGGQITYHGPGQIVAYLLLDLRRRKLTVRTLVTKIEEAVIETLAAYNLASVRKAGAPGIYVASGVHEGAKIAALGLKIRNGCSYHGLSLNVKMDLRPFLAINPCGYAGLETVDMASLEVAADWNDVARTLVRRLIANLDGESAAADTPHALEHSND</sequence>
<gene>
    <name evidence="1" type="primary">lipB</name>
    <name type="ordered locus">Bmul_0416</name>
    <name type="ordered locus">BMULJ_02839</name>
</gene>
<name>LIPB_BURM1</name>
<evidence type="ECO:0000255" key="1">
    <source>
        <dbReference type="HAMAP-Rule" id="MF_00013"/>
    </source>
</evidence>
<evidence type="ECO:0000255" key="2">
    <source>
        <dbReference type="PROSITE-ProRule" id="PRU01067"/>
    </source>
</evidence>
<comment type="function">
    <text evidence="1">Catalyzes the transfer of endogenously produced octanoic acid from octanoyl-acyl-carrier-protein onto the lipoyl domains of lipoate-dependent enzymes. Lipoyl-ACP can also act as a substrate although octanoyl-ACP is likely to be the physiological substrate.</text>
</comment>
<comment type="catalytic activity">
    <reaction evidence="1">
        <text>octanoyl-[ACP] + L-lysyl-[protein] = N(6)-octanoyl-L-lysyl-[protein] + holo-[ACP] + H(+)</text>
        <dbReference type="Rhea" id="RHEA:17665"/>
        <dbReference type="Rhea" id="RHEA-COMP:9636"/>
        <dbReference type="Rhea" id="RHEA-COMP:9685"/>
        <dbReference type="Rhea" id="RHEA-COMP:9752"/>
        <dbReference type="Rhea" id="RHEA-COMP:9928"/>
        <dbReference type="ChEBI" id="CHEBI:15378"/>
        <dbReference type="ChEBI" id="CHEBI:29969"/>
        <dbReference type="ChEBI" id="CHEBI:64479"/>
        <dbReference type="ChEBI" id="CHEBI:78463"/>
        <dbReference type="ChEBI" id="CHEBI:78809"/>
        <dbReference type="EC" id="2.3.1.181"/>
    </reaction>
</comment>
<comment type="pathway">
    <text evidence="1">Protein modification; protein lipoylation via endogenous pathway; protein N(6)-(lipoyl)lysine from octanoyl-[acyl-carrier-protein]: step 1/2.</text>
</comment>
<comment type="subcellular location">
    <subcellularLocation>
        <location evidence="1">Cytoplasm</location>
    </subcellularLocation>
</comment>
<comment type="miscellaneous">
    <text evidence="1">In the reaction, the free carboxyl group of octanoic acid is attached via an amide linkage to the epsilon-amino group of a specific lysine residue of lipoyl domains of lipoate-dependent enzymes.</text>
</comment>
<comment type="similarity">
    <text evidence="1">Belongs to the LipB family.</text>
</comment>
<organism>
    <name type="scientific">Burkholderia multivorans (strain ATCC 17616 / 249)</name>
    <dbReference type="NCBI Taxonomy" id="395019"/>
    <lineage>
        <taxon>Bacteria</taxon>
        <taxon>Pseudomonadati</taxon>
        <taxon>Pseudomonadota</taxon>
        <taxon>Betaproteobacteria</taxon>
        <taxon>Burkholderiales</taxon>
        <taxon>Burkholderiaceae</taxon>
        <taxon>Burkholderia</taxon>
        <taxon>Burkholderia cepacia complex</taxon>
    </lineage>
</organism>
<feature type="chain" id="PRO_1000089445" description="Octanoyltransferase">
    <location>
        <begin position="1"/>
        <end position="248"/>
    </location>
</feature>
<feature type="domain" description="BPL/LPL catalytic" evidence="2">
    <location>
        <begin position="53"/>
        <end position="234"/>
    </location>
</feature>
<feature type="active site" description="Acyl-thioester intermediate" evidence="1">
    <location>
        <position position="196"/>
    </location>
</feature>
<feature type="binding site" evidence="1">
    <location>
        <begin position="93"/>
        <end position="100"/>
    </location>
    <ligand>
        <name>substrate</name>
    </ligand>
</feature>
<feature type="binding site" evidence="1">
    <location>
        <begin position="165"/>
        <end position="167"/>
    </location>
    <ligand>
        <name>substrate</name>
    </ligand>
</feature>
<feature type="binding site" evidence="1">
    <location>
        <begin position="178"/>
        <end position="180"/>
    </location>
    <ligand>
        <name>substrate</name>
    </ligand>
</feature>
<feature type="site" description="Lowers pKa of active site Cys" evidence="1">
    <location>
        <position position="162"/>
    </location>
</feature>
<proteinExistence type="inferred from homology"/>
<keyword id="KW-0012">Acyltransferase</keyword>
<keyword id="KW-0963">Cytoplasm</keyword>
<keyword id="KW-1185">Reference proteome</keyword>
<keyword id="KW-0808">Transferase</keyword>
<protein>
    <recommendedName>
        <fullName evidence="1">Octanoyltransferase</fullName>
        <ecNumber evidence="1">2.3.1.181</ecNumber>
    </recommendedName>
    <alternativeName>
        <fullName evidence="1">Lipoate-protein ligase B</fullName>
    </alternativeName>
    <alternativeName>
        <fullName evidence="1">Lipoyl/octanoyl transferase</fullName>
    </alternativeName>
    <alternativeName>
        <fullName evidence="1">Octanoyl-[acyl-carrier-protein]-protein N-octanoyltransferase</fullName>
    </alternativeName>
</protein>
<accession>A9AEG7</accession>
<dbReference type="EC" id="2.3.1.181" evidence="1"/>
<dbReference type="EMBL" id="CP000868">
    <property type="protein sequence ID" value="ABX14111.1"/>
    <property type="molecule type" value="Genomic_DNA"/>
</dbReference>
<dbReference type="EMBL" id="AP009385">
    <property type="protein sequence ID" value="BAG44727.1"/>
    <property type="molecule type" value="Genomic_DNA"/>
</dbReference>
<dbReference type="RefSeq" id="WP_012212641.1">
    <property type="nucleotide sequence ID" value="NC_010084.1"/>
</dbReference>
<dbReference type="SMR" id="A9AEG7"/>
<dbReference type="STRING" id="395019.BMULJ_02839"/>
<dbReference type="KEGG" id="bmj:BMULJ_02839"/>
<dbReference type="KEGG" id="bmu:Bmul_0416"/>
<dbReference type="eggNOG" id="COG0321">
    <property type="taxonomic scope" value="Bacteria"/>
</dbReference>
<dbReference type="HOGENOM" id="CLU_035168_3_1_4"/>
<dbReference type="UniPathway" id="UPA00538">
    <property type="reaction ID" value="UER00592"/>
</dbReference>
<dbReference type="Proteomes" id="UP000008815">
    <property type="component" value="Chromosome 1"/>
</dbReference>
<dbReference type="GO" id="GO:0005737">
    <property type="term" value="C:cytoplasm"/>
    <property type="evidence" value="ECO:0007669"/>
    <property type="project" value="UniProtKB-SubCell"/>
</dbReference>
<dbReference type="GO" id="GO:0033819">
    <property type="term" value="F:lipoyl(octanoyl) transferase activity"/>
    <property type="evidence" value="ECO:0007669"/>
    <property type="project" value="UniProtKB-EC"/>
</dbReference>
<dbReference type="GO" id="GO:0036211">
    <property type="term" value="P:protein modification process"/>
    <property type="evidence" value="ECO:0007669"/>
    <property type="project" value="InterPro"/>
</dbReference>
<dbReference type="CDD" id="cd16444">
    <property type="entry name" value="LipB"/>
    <property type="match status" value="1"/>
</dbReference>
<dbReference type="FunFam" id="3.30.930.10:FF:000020">
    <property type="entry name" value="Octanoyltransferase"/>
    <property type="match status" value="1"/>
</dbReference>
<dbReference type="Gene3D" id="3.30.930.10">
    <property type="entry name" value="Bira Bifunctional Protein, Domain 2"/>
    <property type="match status" value="1"/>
</dbReference>
<dbReference type="HAMAP" id="MF_00013">
    <property type="entry name" value="LipB"/>
    <property type="match status" value="1"/>
</dbReference>
<dbReference type="InterPro" id="IPR045864">
    <property type="entry name" value="aa-tRNA-synth_II/BPL/LPL"/>
</dbReference>
<dbReference type="InterPro" id="IPR004143">
    <property type="entry name" value="BPL_LPL_catalytic"/>
</dbReference>
<dbReference type="InterPro" id="IPR000544">
    <property type="entry name" value="Octanoyltransferase"/>
</dbReference>
<dbReference type="InterPro" id="IPR020605">
    <property type="entry name" value="Octanoyltransferase_CS"/>
</dbReference>
<dbReference type="NCBIfam" id="TIGR00214">
    <property type="entry name" value="lipB"/>
    <property type="match status" value="1"/>
</dbReference>
<dbReference type="NCBIfam" id="NF010922">
    <property type="entry name" value="PRK14342.1"/>
    <property type="match status" value="1"/>
</dbReference>
<dbReference type="NCBIfam" id="NF010923">
    <property type="entry name" value="PRK14343.1"/>
    <property type="match status" value="1"/>
</dbReference>
<dbReference type="PANTHER" id="PTHR10993:SF7">
    <property type="entry name" value="LIPOYLTRANSFERASE 2, MITOCHONDRIAL-RELATED"/>
    <property type="match status" value="1"/>
</dbReference>
<dbReference type="PANTHER" id="PTHR10993">
    <property type="entry name" value="OCTANOYLTRANSFERASE"/>
    <property type="match status" value="1"/>
</dbReference>
<dbReference type="Pfam" id="PF21948">
    <property type="entry name" value="LplA-B_cat"/>
    <property type="match status" value="1"/>
</dbReference>
<dbReference type="PIRSF" id="PIRSF016262">
    <property type="entry name" value="LPLase"/>
    <property type="match status" value="1"/>
</dbReference>
<dbReference type="SUPFAM" id="SSF55681">
    <property type="entry name" value="Class II aaRS and biotin synthetases"/>
    <property type="match status" value="1"/>
</dbReference>
<dbReference type="PROSITE" id="PS51733">
    <property type="entry name" value="BPL_LPL_CATALYTIC"/>
    <property type="match status" value="1"/>
</dbReference>
<dbReference type="PROSITE" id="PS01313">
    <property type="entry name" value="LIPB"/>
    <property type="match status" value="1"/>
</dbReference>
<reference key="1">
    <citation type="submission" date="2007-10" db="EMBL/GenBank/DDBJ databases">
        <title>Complete sequence of chromosome 1 of Burkholderia multivorans ATCC 17616.</title>
        <authorList>
            <person name="Copeland A."/>
            <person name="Lucas S."/>
            <person name="Lapidus A."/>
            <person name="Barry K."/>
            <person name="Glavina del Rio T."/>
            <person name="Dalin E."/>
            <person name="Tice H."/>
            <person name="Pitluck S."/>
            <person name="Chain P."/>
            <person name="Malfatti S."/>
            <person name="Shin M."/>
            <person name="Vergez L."/>
            <person name="Schmutz J."/>
            <person name="Larimer F."/>
            <person name="Land M."/>
            <person name="Hauser L."/>
            <person name="Kyrpides N."/>
            <person name="Kim E."/>
            <person name="Tiedje J."/>
            <person name="Richardson P."/>
        </authorList>
    </citation>
    <scope>NUCLEOTIDE SEQUENCE [LARGE SCALE GENOMIC DNA]</scope>
    <source>
        <strain>ATCC 17616 / 249</strain>
    </source>
</reference>
<reference key="2">
    <citation type="submission" date="2007-04" db="EMBL/GenBank/DDBJ databases">
        <title>Complete genome sequence of Burkholderia multivorans ATCC 17616.</title>
        <authorList>
            <person name="Ohtsubo Y."/>
            <person name="Yamashita A."/>
            <person name="Kurokawa K."/>
            <person name="Takami H."/>
            <person name="Yuhara S."/>
            <person name="Nishiyama E."/>
            <person name="Endo R."/>
            <person name="Miyazaki R."/>
            <person name="Ono A."/>
            <person name="Yano K."/>
            <person name="Ito M."/>
            <person name="Sota M."/>
            <person name="Yuji N."/>
            <person name="Hattori M."/>
            <person name="Tsuda M."/>
        </authorList>
    </citation>
    <scope>NUCLEOTIDE SEQUENCE [LARGE SCALE GENOMIC DNA]</scope>
    <source>
        <strain>ATCC 17616 / 249</strain>
    </source>
</reference>